<dbReference type="EMBL" id="AF237708">
    <property type="protein sequence ID" value="AAF40218.1"/>
    <property type="molecule type" value="mRNA"/>
</dbReference>
<dbReference type="EMBL" id="CU329670">
    <property type="protein sequence ID" value="CAB63495.1"/>
    <property type="molecule type" value="Genomic_DNA"/>
</dbReference>
<dbReference type="PIR" id="T50260">
    <property type="entry name" value="T50260"/>
</dbReference>
<dbReference type="RefSeq" id="NP_594822.1">
    <property type="nucleotide sequence ID" value="NM_001020251.2"/>
</dbReference>
<dbReference type="PDB" id="8ESQ">
    <property type="method" value="EM"/>
    <property type="resolution" value="2.80 A"/>
    <property type="chains" value="p=1-440"/>
</dbReference>
<dbReference type="PDB" id="8ESR">
    <property type="method" value="EM"/>
    <property type="resolution" value="3.20 A"/>
    <property type="chains" value="p=1-440"/>
</dbReference>
<dbReference type="PDB" id="8ETG">
    <property type="method" value="EM"/>
    <property type="resolution" value="3.40 A"/>
    <property type="chains" value="p=1-440"/>
</dbReference>
<dbReference type="PDB" id="8EUG">
    <property type="method" value="EM"/>
    <property type="resolution" value="2.80 A"/>
    <property type="chains" value="p=1-440"/>
</dbReference>
<dbReference type="PDB" id="8EUI">
    <property type="method" value="EM"/>
    <property type="resolution" value="3.10 A"/>
    <property type="chains" value="p=1-440"/>
</dbReference>
<dbReference type="PDBsum" id="8ESQ"/>
<dbReference type="PDBsum" id="8ESR"/>
<dbReference type="PDBsum" id="8ETG"/>
<dbReference type="PDBsum" id="8EUG"/>
<dbReference type="PDBsum" id="8EUI"/>
<dbReference type="SMR" id="Q9URY0"/>
<dbReference type="BioGRID" id="279966">
    <property type="interactions" value="9"/>
</dbReference>
<dbReference type="FunCoup" id="Q9URY0">
    <property type="interactions" value="462"/>
</dbReference>
<dbReference type="STRING" id="284812.Q9URY0"/>
<dbReference type="iPTMnet" id="Q9URY0"/>
<dbReference type="PaxDb" id="4896-SPAC890.04c.1"/>
<dbReference type="EnsemblFungi" id="SPAC890.04c.1">
    <property type="protein sequence ID" value="SPAC890.04c.1:pep"/>
    <property type="gene ID" value="SPAC890.04c"/>
</dbReference>
<dbReference type="GeneID" id="2543549"/>
<dbReference type="KEGG" id="spo:2543549"/>
<dbReference type="PomBase" id="SPAC890.04c">
    <property type="gene designation" value="ytm1"/>
</dbReference>
<dbReference type="VEuPathDB" id="FungiDB:SPAC890.04c"/>
<dbReference type="eggNOG" id="KOG0313">
    <property type="taxonomic scope" value="Eukaryota"/>
</dbReference>
<dbReference type="HOGENOM" id="CLU_000288_57_0_1"/>
<dbReference type="InParanoid" id="Q9URY0"/>
<dbReference type="OMA" id="DHKYVEF"/>
<dbReference type="PhylomeDB" id="Q9URY0"/>
<dbReference type="Reactome" id="R-SPO-6791226">
    <property type="pathway name" value="Major pathway of rRNA processing in the nucleolus and cytosol"/>
</dbReference>
<dbReference type="PRO" id="PR:Q9URY0"/>
<dbReference type="Proteomes" id="UP000002485">
    <property type="component" value="Chromosome I"/>
</dbReference>
<dbReference type="GO" id="GO:0000785">
    <property type="term" value="C:chromatin"/>
    <property type="evidence" value="ECO:0007005"/>
    <property type="project" value="PomBase"/>
</dbReference>
<dbReference type="GO" id="GO:0005730">
    <property type="term" value="C:nucleolus"/>
    <property type="evidence" value="ECO:0000314"/>
    <property type="project" value="PomBase"/>
</dbReference>
<dbReference type="GO" id="GO:0005654">
    <property type="term" value="C:nucleoplasm"/>
    <property type="evidence" value="ECO:0007669"/>
    <property type="project" value="UniProtKB-SubCell"/>
</dbReference>
<dbReference type="GO" id="GO:0005634">
    <property type="term" value="C:nucleus"/>
    <property type="evidence" value="ECO:0007005"/>
    <property type="project" value="PomBase"/>
</dbReference>
<dbReference type="GO" id="GO:0070545">
    <property type="term" value="C:PeBoW complex"/>
    <property type="evidence" value="ECO:0000318"/>
    <property type="project" value="GO_Central"/>
</dbReference>
<dbReference type="GO" id="GO:0030684">
    <property type="term" value="C:preribosome"/>
    <property type="evidence" value="ECO:0000314"/>
    <property type="project" value="PomBase"/>
</dbReference>
<dbReference type="GO" id="GO:0030687">
    <property type="term" value="C:preribosome, large subunit precursor"/>
    <property type="evidence" value="ECO:0000318"/>
    <property type="project" value="GO_Central"/>
</dbReference>
<dbReference type="GO" id="GO:0043021">
    <property type="term" value="F:ribonucleoprotein complex binding"/>
    <property type="evidence" value="ECO:0007669"/>
    <property type="project" value="UniProtKB-UniRule"/>
</dbReference>
<dbReference type="GO" id="GO:1902626">
    <property type="term" value="P:assembly of large subunit precursor of preribosome"/>
    <property type="evidence" value="ECO:0000269"/>
    <property type="project" value="PomBase"/>
</dbReference>
<dbReference type="GO" id="GO:0000466">
    <property type="term" value="P:maturation of 5.8S rRNA from tricistronic rRNA transcript (SSU-rRNA, 5.8S rRNA, LSU-rRNA)"/>
    <property type="evidence" value="ECO:0007669"/>
    <property type="project" value="UniProtKB-UniRule"/>
</dbReference>
<dbReference type="GO" id="GO:0000463">
    <property type="term" value="P:maturation of LSU-rRNA from tricistronic rRNA transcript (SSU-rRNA, 5.8S rRNA, LSU-rRNA)"/>
    <property type="evidence" value="ECO:0007669"/>
    <property type="project" value="UniProtKB-UniRule"/>
</dbReference>
<dbReference type="GO" id="GO:0042273">
    <property type="term" value="P:ribosomal large subunit biogenesis"/>
    <property type="evidence" value="ECO:0000318"/>
    <property type="project" value="GO_Central"/>
</dbReference>
<dbReference type="Gene3D" id="2.130.10.10">
    <property type="entry name" value="YVTN repeat-like/Quinoprotein amine dehydrogenase"/>
    <property type="match status" value="1"/>
</dbReference>
<dbReference type="HAMAP" id="MF_03029">
    <property type="entry name" value="WDR12"/>
    <property type="match status" value="1"/>
</dbReference>
<dbReference type="InterPro" id="IPR020472">
    <property type="entry name" value="G-protein_beta_WD-40_rep"/>
</dbReference>
<dbReference type="InterPro" id="IPR012972">
    <property type="entry name" value="NLE"/>
</dbReference>
<dbReference type="InterPro" id="IPR015943">
    <property type="entry name" value="WD40/YVTN_repeat-like_dom_sf"/>
</dbReference>
<dbReference type="InterPro" id="IPR019775">
    <property type="entry name" value="WD40_repeat_CS"/>
</dbReference>
<dbReference type="InterPro" id="IPR036322">
    <property type="entry name" value="WD40_repeat_dom_sf"/>
</dbReference>
<dbReference type="InterPro" id="IPR001680">
    <property type="entry name" value="WD40_rpt"/>
</dbReference>
<dbReference type="InterPro" id="IPR028599">
    <property type="entry name" value="WDR12/Ytm1"/>
</dbReference>
<dbReference type="PANTHER" id="PTHR19855:SF11">
    <property type="entry name" value="RIBOSOME BIOGENESIS PROTEIN WDR12"/>
    <property type="match status" value="1"/>
</dbReference>
<dbReference type="PANTHER" id="PTHR19855">
    <property type="entry name" value="WD40 REPEAT PROTEIN 12, 37"/>
    <property type="match status" value="1"/>
</dbReference>
<dbReference type="Pfam" id="PF08154">
    <property type="entry name" value="NLE"/>
    <property type="match status" value="1"/>
</dbReference>
<dbReference type="Pfam" id="PF00400">
    <property type="entry name" value="WD40"/>
    <property type="match status" value="4"/>
</dbReference>
<dbReference type="PRINTS" id="PR00320">
    <property type="entry name" value="GPROTEINBRPT"/>
</dbReference>
<dbReference type="SMART" id="SM00320">
    <property type="entry name" value="WD40"/>
    <property type="match status" value="7"/>
</dbReference>
<dbReference type="SUPFAM" id="SSF50978">
    <property type="entry name" value="WD40 repeat-like"/>
    <property type="match status" value="1"/>
</dbReference>
<dbReference type="PROSITE" id="PS00678">
    <property type="entry name" value="WD_REPEATS_1"/>
    <property type="match status" value="1"/>
</dbReference>
<dbReference type="PROSITE" id="PS50082">
    <property type="entry name" value="WD_REPEATS_2"/>
    <property type="match status" value="4"/>
</dbReference>
<dbReference type="PROSITE" id="PS50294">
    <property type="entry name" value="WD_REPEATS_REGION"/>
    <property type="match status" value="1"/>
</dbReference>
<gene>
    <name type="primary">ytm1</name>
    <name type="ORF">SPAC890.04c</name>
</gene>
<name>YTM1_SCHPO</name>
<accession>Q9URY0</accession>
<organism>
    <name type="scientific">Schizosaccharomyces pombe (strain 972 / ATCC 24843)</name>
    <name type="common">Fission yeast</name>
    <dbReference type="NCBI Taxonomy" id="284812"/>
    <lineage>
        <taxon>Eukaryota</taxon>
        <taxon>Fungi</taxon>
        <taxon>Dikarya</taxon>
        <taxon>Ascomycota</taxon>
        <taxon>Taphrinomycotina</taxon>
        <taxon>Schizosaccharomycetes</taxon>
        <taxon>Schizosaccharomycetales</taxon>
        <taxon>Schizosaccharomycetaceae</taxon>
        <taxon>Schizosaccharomyces</taxon>
    </lineage>
</organism>
<evidence type="ECO:0000255" key="1">
    <source>
        <dbReference type="HAMAP-Rule" id="MF_03029"/>
    </source>
</evidence>
<evidence type="ECO:0000269" key="2">
    <source>
    </source>
</evidence>
<evidence type="ECO:0007829" key="3">
    <source>
        <dbReference type="PDB" id="8ETG"/>
    </source>
</evidence>
<comment type="function">
    <text evidence="1">Component of the NOP7 complex, which is required for maturation of the 25S and 5.8S ribosomal RNAs and formation of the 60S ribosome.</text>
</comment>
<comment type="subunit">
    <text evidence="1">Component of the NOP7 complex, composed of erb1, ppp1/nop7 and ytm1. The complex is held together by erb1, which interacts with ppp1/nop7 via its N-terminal domain and with ytm1 via a high-affinity interaction between the seven-bladed beta-propeller domains of the 2 proteins. The NOP7 complex associates with the 66S pre-ribosome. Interacts (via UBL domain) with mdn1 (via VWFA/MIDAS domain).</text>
</comment>
<comment type="subcellular location">
    <subcellularLocation>
        <location evidence="1">Nucleus</location>
        <location evidence="1">Nucleolus</location>
    </subcellularLocation>
    <subcellularLocation>
        <location evidence="1">Nucleus</location>
        <location evidence="1">Nucleoplasm</location>
    </subcellularLocation>
</comment>
<comment type="similarity">
    <text evidence="1">Belongs to the WD repeat WDR12/YTM1 family.</text>
</comment>
<reference key="1">
    <citation type="submission" date="2000-02" db="EMBL/GenBank/DDBJ databases">
        <title>Schizosaccharomyces pombe homolog of the Saccharomyces cerevisiae YTM1.</title>
        <authorList>
            <person name="Matsumoto S."/>
        </authorList>
    </citation>
    <scope>NUCLEOTIDE SEQUENCE [MRNA]</scope>
    <source>
        <strain>972 / ATCC 24843</strain>
    </source>
</reference>
<reference key="2">
    <citation type="journal article" date="2002" name="Nature">
        <title>The genome sequence of Schizosaccharomyces pombe.</title>
        <authorList>
            <person name="Wood V."/>
            <person name="Gwilliam R."/>
            <person name="Rajandream M.A."/>
            <person name="Lyne M.H."/>
            <person name="Lyne R."/>
            <person name="Stewart A."/>
            <person name="Sgouros J.G."/>
            <person name="Peat N."/>
            <person name="Hayles J."/>
            <person name="Baker S.G."/>
            <person name="Basham D."/>
            <person name="Bowman S."/>
            <person name="Brooks K."/>
            <person name="Brown D."/>
            <person name="Brown S."/>
            <person name="Chillingworth T."/>
            <person name="Churcher C.M."/>
            <person name="Collins M."/>
            <person name="Connor R."/>
            <person name="Cronin A."/>
            <person name="Davis P."/>
            <person name="Feltwell T."/>
            <person name="Fraser A."/>
            <person name="Gentles S."/>
            <person name="Goble A."/>
            <person name="Hamlin N."/>
            <person name="Harris D.E."/>
            <person name="Hidalgo J."/>
            <person name="Hodgson G."/>
            <person name="Holroyd S."/>
            <person name="Hornsby T."/>
            <person name="Howarth S."/>
            <person name="Huckle E.J."/>
            <person name="Hunt S."/>
            <person name="Jagels K."/>
            <person name="James K.D."/>
            <person name="Jones L."/>
            <person name="Jones M."/>
            <person name="Leather S."/>
            <person name="McDonald S."/>
            <person name="McLean J."/>
            <person name="Mooney P."/>
            <person name="Moule S."/>
            <person name="Mungall K.L."/>
            <person name="Murphy L.D."/>
            <person name="Niblett D."/>
            <person name="Odell C."/>
            <person name="Oliver K."/>
            <person name="O'Neil S."/>
            <person name="Pearson D."/>
            <person name="Quail M.A."/>
            <person name="Rabbinowitsch E."/>
            <person name="Rutherford K.M."/>
            <person name="Rutter S."/>
            <person name="Saunders D."/>
            <person name="Seeger K."/>
            <person name="Sharp S."/>
            <person name="Skelton J."/>
            <person name="Simmonds M.N."/>
            <person name="Squares R."/>
            <person name="Squares S."/>
            <person name="Stevens K."/>
            <person name="Taylor K."/>
            <person name="Taylor R.G."/>
            <person name="Tivey A."/>
            <person name="Walsh S.V."/>
            <person name="Warren T."/>
            <person name="Whitehead S."/>
            <person name="Woodward J.R."/>
            <person name="Volckaert G."/>
            <person name="Aert R."/>
            <person name="Robben J."/>
            <person name="Grymonprez B."/>
            <person name="Weltjens I."/>
            <person name="Vanstreels E."/>
            <person name="Rieger M."/>
            <person name="Schaefer M."/>
            <person name="Mueller-Auer S."/>
            <person name="Gabel C."/>
            <person name="Fuchs M."/>
            <person name="Duesterhoeft A."/>
            <person name="Fritzc C."/>
            <person name="Holzer E."/>
            <person name="Moestl D."/>
            <person name="Hilbert H."/>
            <person name="Borzym K."/>
            <person name="Langer I."/>
            <person name="Beck A."/>
            <person name="Lehrach H."/>
            <person name="Reinhardt R."/>
            <person name="Pohl T.M."/>
            <person name="Eger P."/>
            <person name="Zimmermann W."/>
            <person name="Wedler H."/>
            <person name="Wambutt R."/>
            <person name="Purnelle B."/>
            <person name="Goffeau A."/>
            <person name="Cadieu E."/>
            <person name="Dreano S."/>
            <person name="Gloux S."/>
            <person name="Lelaure V."/>
            <person name="Mottier S."/>
            <person name="Galibert F."/>
            <person name="Aves S.J."/>
            <person name="Xiang Z."/>
            <person name="Hunt C."/>
            <person name="Moore K."/>
            <person name="Hurst S.M."/>
            <person name="Lucas M."/>
            <person name="Rochet M."/>
            <person name="Gaillardin C."/>
            <person name="Tallada V.A."/>
            <person name="Garzon A."/>
            <person name="Thode G."/>
            <person name="Daga R.R."/>
            <person name="Cruzado L."/>
            <person name="Jimenez J."/>
            <person name="Sanchez M."/>
            <person name="del Rey F."/>
            <person name="Benito J."/>
            <person name="Dominguez A."/>
            <person name="Revuelta J.L."/>
            <person name="Moreno S."/>
            <person name="Armstrong J."/>
            <person name="Forsburg S.L."/>
            <person name="Cerutti L."/>
            <person name="Lowe T."/>
            <person name="McCombie W.R."/>
            <person name="Paulsen I."/>
            <person name="Potashkin J."/>
            <person name="Shpakovski G.V."/>
            <person name="Ussery D."/>
            <person name="Barrell B.G."/>
            <person name="Nurse P."/>
        </authorList>
    </citation>
    <scope>NUCLEOTIDE SEQUENCE [LARGE SCALE GENOMIC DNA]</scope>
    <source>
        <strain>972 / ATCC 24843</strain>
    </source>
</reference>
<reference key="3">
    <citation type="journal article" date="2008" name="J. Proteome Res.">
        <title>Phosphoproteome analysis of fission yeast.</title>
        <authorList>
            <person name="Wilson-Grady J.T."/>
            <person name="Villen J."/>
            <person name="Gygi S.P."/>
        </authorList>
    </citation>
    <scope>PHOSPHORYLATION [LARGE SCALE ANALYSIS] AT THR-140 AND SER-242</scope>
    <scope>IDENTIFICATION BY MASS SPECTROMETRY</scope>
</reference>
<protein>
    <recommendedName>
        <fullName evidence="1">Ribosome biogenesis protein ytm1</fullName>
    </recommendedName>
</protein>
<keyword id="KW-0002">3D-structure</keyword>
<keyword id="KW-0539">Nucleus</keyword>
<keyword id="KW-0597">Phosphoprotein</keyword>
<keyword id="KW-1185">Reference proteome</keyword>
<keyword id="KW-0677">Repeat</keyword>
<keyword id="KW-0690">Ribosome biogenesis</keyword>
<keyword id="KW-0698">rRNA processing</keyword>
<keyword id="KW-0853">WD repeat</keyword>
<feature type="chain" id="PRO_0000051465" description="Ribosome biogenesis protein ytm1">
    <location>
        <begin position="1"/>
        <end position="440"/>
    </location>
</feature>
<feature type="repeat" description="WD 1">
    <location>
        <begin position="102"/>
        <end position="139"/>
    </location>
</feature>
<feature type="repeat" description="WD 2">
    <location>
        <begin position="141"/>
        <end position="180"/>
    </location>
</feature>
<feature type="repeat" description="WD 3">
    <location>
        <begin position="195"/>
        <end position="234"/>
    </location>
</feature>
<feature type="repeat" description="WD 4">
    <location>
        <begin position="267"/>
        <end position="306"/>
    </location>
</feature>
<feature type="repeat" description="WD 5">
    <location>
        <begin position="308"/>
        <end position="347"/>
    </location>
</feature>
<feature type="repeat" description="WD 6">
    <location>
        <begin position="353"/>
        <end position="393"/>
    </location>
</feature>
<feature type="repeat" description="WD 7">
    <location>
        <begin position="403"/>
        <end position="440"/>
    </location>
</feature>
<feature type="region of interest" description="Ubiquitin-like (UBL) domain" evidence="1">
    <location>
        <begin position="11"/>
        <end position="90"/>
    </location>
</feature>
<feature type="modified residue" description="Phosphothreonine" evidence="2">
    <location>
        <position position="140"/>
    </location>
</feature>
<feature type="modified residue" description="Phosphoserine" evidence="2">
    <location>
        <position position="242"/>
    </location>
</feature>
<feature type="strand" evidence="3">
    <location>
        <begin position="96"/>
        <end position="102"/>
    </location>
</feature>
<feature type="strand" evidence="3">
    <location>
        <begin position="107"/>
        <end position="112"/>
    </location>
</feature>
<feature type="strand" evidence="3">
    <location>
        <begin position="117"/>
        <end position="121"/>
    </location>
</feature>
<feature type="strand" evidence="3">
    <location>
        <begin position="126"/>
        <end position="129"/>
    </location>
</feature>
<feature type="strand" evidence="3">
    <location>
        <begin position="131"/>
        <end position="133"/>
    </location>
</feature>
<feature type="strand" evidence="3">
    <location>
        <begin position="135"/>
        <end position="138"/>
    </location>
</feature>
<feature type="strand" evidence="3">
    <location>
        <begin position="146"/>
        <end position="153"/>
    </location>
</feature>
<feature type="strand" evidence="3">
    <location>
        <begin position="156"/>
        <end position="162"/>
    </location>
</feature>
<feature type="strand" evidence="3">
    <location>
        <begin position="165"/>
        <end position="171"/>
    </location>
</feature>
<feature type="strand" evidence="3">
    <location>
        <begin position="188"/>
        <end position="194"/>
    </location>
</feature>
<feature type="strand" evidence="3">
    <location>
        <begin position="207"/>
        <end position="215"/>
    </location>
</feature>
<feature type="strand" evidence="3">
    <location>
        <begin position="219"/>
        <end position="229"/>
    </location>
</feature>
<feature type="strand" evidence="3">
    <location>
        <begin position="262"/>
        <end position="266"/>
    </location>
</feature>
<feature type="strand" evidence="3">
    <location>
        <begin position="272"/>
        <end position="277"/>
    </location>
</feature>
<feature type="strand" evidence="3">
    <location>
        <begin position="283"/>
        <end position="288"/>
    </location>
</feature>
<feature type="strand" evidence="3">
    <location>
        <begin position="291"/>
        <end position="297"/>
    </location>
</feature>
<feature type="turn" evidence="3">
    <location>
        <begin position="298"/>
        <end position="300"/>
    </location>
</feature>
<feature type="strand" evidence="3">
    <location>
        <begin position="302"/>
        <end position="308"/>
    </location>
</feature>
<feature type="strand" evidence="3">
    <location>
        <begin position="313"/>
        <end position="319"/>
    </location>
</feature>
<feature type="turn" evidence="3">
    <location>
        <begin position="320"/>
        <end position="323"/>
    </location>
</feature>
<feature type="strand" evidence="3">
    <location>
        <begin position="324"/>
        <end position="329"/>
    </location>
</feature>
<feature type="strand" evidence="3">
    <location>
        <begin position="332"/>
        <end position="337"/>
    </location>
</feature>
<feature type="strand" evidence="3">
    <location>
        <begin position="348"/>
        <end position="352"/>
    </location>
</feature>
<feature type="strand" evidence="3">
    <location>
        <begin position="358"/>
        <end position="363"/>
    </location>
</feature>
<feature type="strand" evidence="3">
    <location>
        <begin position="370"/>
        <end position="375"/>
    </location>
</feature>
<feature type="strand" evidence="3">
    <location>
        <begin position="378"/>
        <end position="386"/>
    </location>
</feature>
<feature type="strand" evidence="3">
    <location>
        <begin position="392"/>
        <end position="396"/>
    </location>
</feature>
<feature type="strand" evidence="3">
    <location>
        <begin position="408"/>
        <end position="414"/>
    </location>
</feature>
<feature type="turn" evidence="3">
    <location>
        <begin position="415"/>
        <end position="417"/>
    </location>
</feature>
<feature type="strand" evidence="3">
    <location>
        <begin position="418"/>
        <end position="423"/>
    </location>
</feature>
<feature type="strand" evidence="3">
    <location>
        <begin position="427"/>
        <end position="432"/>
    </location>
</feature>
<proteinExistence type="evidence at protein level"/>
<sequence length="440" mass="48334">MDAQSAPSGQVQVRFTTRNEDLAVGDTPIFVPTSLKRYGLSQIVNHLLKTEKPTPFDFLVQGQLLKTTLDEYIVQNGLSTESILDIEYIQSTLPPAYLASFSHDDWISGIQLTSDTILTSSYDGIARVWDKSGEIKFQSTGCGSSLKSASWHIPNQSFLTASLDQKIFHWVIEEPESMLDAEKKSSGILQTLFVGHKDIVERVRSLESSSVFISASADNTVGIWDFERSPETTLESFSSSISKKRRRKNAEFTPQAGARSPLILCEGHTGPVMDIVFSDDPSVAYSVGQDHTIKTWDLITGQNVDSKITKAPLLCVEKLTDLHLVICGSSARHIVVHDPRAGSDKIVSHTLSGHKNLVSGLSASPENPYMFASVSHDNTCRVWDVRATSGSIYTISRAEKTGSQWDKLFAVDWNKSIGIVTGGTDKQLQINQSSSFGKSE</sequence>